<evidence type="ECO:0000255" key="1">
    <source>
        <dbReference type="HAMAP-Rule" id="MF_04082"/>
    </source>
</evidence>
<evidence type="ECO:0000256" key="2">
    <source>
        <dbReference type="SAM" id="MobiDB-lite"/>
    </source>
</evidence>
<dbReference type="EMBL" id="U39362">
    <property type="protein sequence ID" value="AAA81042.1"/>
    <property type="molecule type" value="Genomic_DNA"/>
</dbReference>
<dbReference type="Proteomes" id="UP000007691">
    <property type="component" value="Genome"/>
</dbReference>
<dbReference type="GO" id="GO:0033644">
    <property type="term" value="C:host cell membrane"/>
    <property type="evidence" value="ECO:0007669"/>
    <property type="project" value="UniProtKB-SubCell"/>
</dbReference>
<dbReference type="GO" id="GO:0016020">
    <property type="term" value="C:membrane"/>
    <property type="evidence" value="ECO:0007669"/>
    <property type="project" value="UniProtKB-UniRule"/>
</dbReference>
<dbReference type="GO" id="GO:0042609">
    <property type="term" value="F:CD4 receptor binding"/>
    <property type="evidence" value="ECO:0007669"/>
    <property type="project" value="UniProtKB-UniRule"/>
</dbReference>
<dbReference type="GO" id="GO:0005261">
    <property type="term" value="F:monoatomic cation channel activity"/>
    <property type="evidence" value="ECO:0007669"/>
    <property type="project" value="UniProtKB-UniRule"/>
</dbReference>
<dbReference type="GO" id="GO:0032801">
    <property type="term" value="P:receptor catabolic process"/>
    <property type="evidence" value="ECO:0007669"/>
    <property type="project" value="UniProtKB-UniRule"/>
</dbReference>
<dbReference type="GO" id="GO:0052170">
    <property type="term" value="P:symbiont-mediated suppression of host innate immune response"/>
    <property type="evidence" value="ECO:0007669"/>
    <property type="project" value="UniProtKB-KW"/>
</dbReference>
<dbReference type="GO" id="GO:0039502">
    <property type="term" value="P:symbiont-mediated suppression of host type I interferon-mediated signaling pathway"/>
    <property type="evidence" value="ECO:0007669"/>
    <property type="project" value="UniProtKB-UniRule"/>
</dbReference>
<dbReference type="GO" id="GO:0039587">
    <property type="term" value="P:symbiont-mediated-mediated suppression of host tetherin activity"/>
    <property type="evidence" value="ECO:0007669"/>
    <property type="project" value="UniProtKB-UniRule"/>
</dbReference>
<dbReference type="GO" id="GO:0019076">
    <property type="term" value="P:viral release from host cell"/>
    <property type="evidence" value="ECO:0007669"/>
    <property type="project" value="UniProtKB-UniRule"/>
</dbReference>
<dbReference type="Gene3D" id="1.10.195.10">
    <property type="entry name" value="HIV-1 VPU cytoplasmic domain"/>
    <property type="match status" value="1"/>
</dbReference>
<dbReference type="HAMAP" id="MF_04082">
    <property type="entry name" value="HIV_VPU"/>
    <property type="match status" value="1"/>
</dbReference>
<dbReference type="InterPro" id="IPR008187">
    <property type="entry name" value="Vpu"/>
</dbReference>
<dbReference type="InterPro" id="IPR009032">
    <property type="entry name" value="Vpu_cyt_dom_sf"/>
</dbReference>
<dbReference type="Pfam" id="PF00558">
    <property type="entry name" value="Vpu"/>
    <property type="match status" value="1"/>
</dbReference>
<dbReference type="SUPFAM" id="SSF57647">
    <property type="entry name" value="HIV-1 VPU cytoplasmic domain"/>
    <property type="match status" value="1"/>
</dbReference>
<organism>
    <name type="scientific">Human immunodeficiency virus type 1 group M subtype B (strain 89.6)</name>
    <name type="common">HIV-1</name>
    <dbReference type="NCBI Taxonomy" id="401671"/>
    <lineage>
        <taxon>Viruses</taxon>
        <taxon>Riboviria</taxon>
        <taxon>Pararnavirae</taxon>
        <taxon>Artverviricota</taxon>
        <taxon>Revtraviricetes</taxon>
        <taxon>Ortervirales</taxon>
        <taxon>Retroviridae</taxon>
        <taxon>Orthoretrovirinae</taxon>
        <taxon>Lentivirus</taxon>
        <taxon>Human immunodeficiency virus type 1</taxon>
    </lineage>
</organism>
<proteinExistence type="inferred from homology"/>
<keyword id="KW-0014">AIDS</keyword>
<keyword id="KW-0053">Apoptosis</keyword>
<keyword id="KW-1043">Host membrane</keyword>
<keyword id="KW-0945">Host-virus interaction</keyword>
<keyword id="KW-1090">Inhibition of host innate immune response by virus</keyword>
<keyword id="KW-1084">Inhibition of host tetherin by virus</keyword>
<keyword id="KW-0407">Ion channel</keyword>
<keyword id="KW-0406">Ion transport</keyword>
<keyword id="KW-0472">Membrane</keyword>
<keyword id="KW-0597">Phosphoprotein</keyword>
<keyword id="KW-1185">Reference proteome</keyword>
<keyword id="KW-0812">Transmembrane</keyword>
<keyword id="KW-1133">Transmembrane helix</keyword>
<keyword id="KW-0813">Transport</keyword>
<keyword id="KW-0899">Viral immunoevasion</keyword>
<name>VPU_HV1B9</name>
<accession>Q89843</accession>
<comment type="function">
    <text evidence="1">Enhances virion budding by targeting host CD4 and Tetherin/BST2 to proteasome degradation. Degradation of CD4 prevents any unwanted premature interactions between viral Env and its host receptor CD4 in the endoplasmic reticulum. Degradation of antiretroviral protein Tetherin/BST2 is important for virion budding, as BST2 tethers new viral particles to the host cell membrane. Mechanistically, Vpu bridges either CD4 or BST2 to BTRC, a substrate recognition subunit of the Skp1/Cullin/F-box protein E3 ubiquitin ligase, induces their ubiquitination and subsequent proteasomal degradation. The alteration of the E3 ligase specificity by Vpu seems to promote the degradation of host IKBKB, leading to NF-kappa-B down-regulation and subsequent apoptosis. Acts as a viroporin that forms an oligomeric ion channel in membranes. Modulates the host DNA repair mechanisms to promote degradation of nuclear viral cDNA in cells that are already productively infected in order to suppress immune sensing and proviral hyper-integration (superinfection). Manipulates PML-NBs and modulates SUMOylation of host BLM protein thereby enhancing its DNA-end processing activity toward viral unintegrated linear DNA. Also inhibits RAD52-mediated homologous repair of viral cDNA, preventing the generation of dead-end circular forms of single copies of the long terminal repeat and permitting sustained nucleolytic attack.</text>
</comment>
<comment type="activity regulation">
    <text evidence="1">Ion channel activity is inhibited by hexamethylene amiloride in vitro.</text>
</comment>
<comment type="subunit">
    <text evidence="1">Homopentamer. Interacts with host CD4 and BRTC; these interactions induce proteasomal degradation of CD4. Interacts with host BST2; this interaction leads to the degradation of host BST2. Interacts with host FBXW11. Interacts with host AP1M1; this interaction plays a role in the mistrafficking and subsequent degradation of host BST2. Interacts with host RANBP2; this interaction allows Vpu to down-regulate host BLM sumoylation.</text>
</comment>
<comment type="subcellular location">
    <subcellularLocation>
        <location evidence="1">Host membrane</location>
        <topology evidence="1">Single-pass type I membrane protein</topology>
    </subcellularLocation>
</comment>
<comment type="domain">
    <text evidence="1">The N-terminus and transmembrane domains are required for self-oligomerization and proper virion budding, whereas the cytoplasmic domain is required for CD4 degradation. The cytoplasmic domain is composed of 2 amphipathic alpha helix that form a U-shape.</text>
</comment>
<comment type="PTM">
    <text evidence="1">Phosphorylated by host CK2. This phosphorylation is necessary for interaction with human BTRC and degradation of CD4.</text>
</comment>
<comment type="miscellaneous">
    <text evidence="1">HIV-1 lineages are divided in three main groups, M (for Major), O (for Outlier), and N (for New, or Non-M, Non-O). The vast majority of strains found worldwide belong to the group M. Group O seems to be endemic to and largely confined to Cameroon and neighboring countries in West Central Africa, where these viruses represent a small minority of HIV-1 strains. The group N is represented by a limited number of isolates from Cameroonian persons. The group M is further subdivided in 9 clades or subtypes (A to D, F to H, J and K).</text>
</comment>
<comment type="similarity">
    <text evidence="1">Belongs to the HIV-1 VPU protein family.</text>
</comment>
<feature type="chain" id="PRO_0000250988" description="Protein Vpu">
    <location>
        <begin position="1"/>
        <end position="80"/>
    </location>
</feature>
<feature type="topological domain" description="Extracellular" evidence="1">
    <location>
        <begin position="1"/>
        <end position="7"/>
    </location>
</feature>
<feature type="transmembrane region" description="Helical" evidence="1">
    <location>
        <begin position="8"/>
        <end position="28"/>
    </location>
</feature>
<feature type="topological domain" description="Cytoplasmic" evidence="1">
    <location>
        <begin position="29"/>
        <end position="80"/>
    </location>
</feature>
<feature type="region of interest" description="Disordered" evidence="2">
    <location>
        <begin position="49"/>
        <end position="80"/>
    </location>
</feature>
<feature type="compositionally biased region" description="Acidic residues" evidence="2">
    <location>
        <begin position="53"/>
        <end position="65"/>
    </location>
</feature>
<feature type="modified residue" description="Phosphoserine; by host CK2" evidence="1">
    <location>
        <position position="53"/>
    </location>
</feature>
<feature type="modified residue" description="Phosphoserine; by host CK2" evidence="1">
    <location>
        <position position="57"/>
    </location>
</feature>
<organismHost>
    <name type="scientific">Homo sapiens</name>
    <name type="common">Human</name>
    <dbReference type="NCBI Taxonomy" id="9606"/>
</organismHost>
<protein>
    <recommendedName>
        <fullName evidence="1">Protein Vpu</fullName>
    </recommendedName>
    <alternativeName>
        <fullName evidence="1">U ORF protein</fullName>
    </alternativeName>
    <alternativeName>
        <fullName evidence="1">Viral protein U</fullName>
    </alternativeName>
</protein>
<reference key="1">
    <citation type="journal article" date="1992" name="J. Virol.">
        <title>An infectious molecular clone of an unusual macrophage-tropic and highly cytopathic strain of human immunodeficiency virus type 1.</title>
        <authorList>
            <person name="Collman R."/>
            <person name="Balliet J.W."/>
            <person name="Gregory S.A."/>
            <person name="Friedman H."/>
            <person name="Kolson D.L."/>
            <person name="Nathanson N."/>
            <person name="Srinivasan A."/>
        </authorList>
    </citation>
    <scope>NUCLEOTIDE SEQUENCE [GENOMIC DNA]</scope>
</reference>
<sequence length="80" mass="9197">MLSLQILAIVALVVAAIIAIVVWSIVFIEYRKILRQRKIDRLIDRIREREEDSGNESEGDQEELAALERGHLAPWDVDDL</sequence>
<gene>
    <name evidence="1" type="primary">vpu</name>
</gene>